<accession>Q2VL84</accession>
<protein>
    <recommendedName>
        <fullName evidence="5">Homeobox protein MSX-1</fullName>
    </recommendedName>
    <alternativeName>
        <fullName>Msh homeobox 1-like protein</fullName>
    </alternativeName>
</protein>
<name>MSX1_CALJA</name>
<reference key="1">
    <citation type="journal article" date="2006" name="Mol. Biol. Evol.">
        <title>Molecular evolution of the primate developmental genes MSX1 and PAX9.</title>
        <authorList>
            <person name="Perry G.H."/>
            <person name="Verrelli B.C."/>
            <person name="Stone A.C."/>
        </authorList>
    </citation>
    <scope>NUCLEOTIDE SEQUENCE [GENOMIC DNA] OF 7-303</scope>
    <source>
        <strain>Isolate Cj220-87</strain>
    </source>
</reference>
<comment type="function">
    <text evidence="1 2">Acts as a transcriptional repressor (By similarity). Capable of transcription autoinactivation (By similarity). Binds to the consensus sequence 5'-C/GTAAT-3' in downstream activin regulatory elements (DARE) in the gene promoter, thereby repressing the transcription of CGA/alpha-GSU and GNRHR (By similarity). Represses transcription of myoblast differentiation factors (By similarity). Binds to core enhancer regions in target gene promoters of myoblast differentiation factors with binding specificity facilitated by interaction with PIAS1 (By similarity). Regulates, in a stage-specific manner, a developmental program of gene expression in the fetal tooth bud that controls odontoblast differentiation and proliferation of dental mesenchymal cells (By similarity). At the bud stage, required for mesenchymal molar tooth bud development via facilitating reciprocal signaling between dental epithelial and mesenchymal cells (By similarity). May also regulate expression of Wnt antagonists such as DKK2 and SFPR2 in the developing tooth mesenchyme (By similarity). Required for BMP4 expression in dental mesenchyme cells (By similarity). Also, in response to BMP4, required for BMP4 expression in neighboring dental epithelial cells (By similarity). Required for maximal FGF4-induced expression of SDC1 in dental mesenchyme cells (By similarity). Also in response to SDC1, required for SDC1 expression in neighboring dental epithelial cells (By similarity). At the early bell stage, acts to drive proliferation of dental mesenchyme cells, however during the late bell stage acts as an homeostatic regulator of the cell cycle (By similarity). Regulates proliferation and inhibits premature mesenchymal odontogenesis during the bell stage via inhibition of the Wnt signaling component CTNNB1 and subsequent repression of the odontoblast differentiation factors BMP2, BMP4, LEF1, ALPL and BGLAP/OCN (By similarity). Additionally, required for correct development and fusion of the palatal shelves and embryonic mandibular formation (By similarity). Plays a role in embryonic bone formation of the middle ear, skull and nasal bones (By similarity). Required for correct formation and thickness of the nail plate (By similarity). May play a role in limb-pattern formation (By similarity).</text>
</comment>
<comment type="subunit">
    <text evidence="1">Interacts with CREBBP/CBP, TBP and SP1; interaction with these transcription activators may inhibit autoinactivation (By similarity). Interacts (via C-terminus) with PIAS1 (via N-terminus); the interaction is required for the localization of both proteins to the nuclear periphery and specific binding of MSX1 to the core enhancer region in target gene promoters (By similarity). Interacts with H1-5 (By similarity).</text>
</comment>
<comment type="subcellular location">
    <subcellularLocation>
        <location evidence="1">Nucleus</location>
    </subcellularLocation>
    <text evidence="1">Interaction with PIAS1 is required for localization to the nuclear periphery (By similarity).</text>
</comment>
<comment type="PTM">
    <text evidence="1">Sumoylated by PIAS1, desumoylated by SENP1 (By similarity). Sumoylation of Lys-15 and Lys-133 not required for interaction with H1-5, transcriptional repression, inhibition of myoblast differentiation, or binding to gene promoters (By similarity).</text>
</comment>
<comment type="similarity">
    <text evidence="5">Belongs to the Msh homeobox family.</text>
</comment>
<comment type="caution">
    <text evidence="5">It is uncertain whether Met-1 or Met-7 is the initiator.</text>
</comment>
<organism>
    <name type="scientific">Callithrix jacchus</name>
    <name type="common">White-tufted-ear marmoset</name>
    <dbReference type="NCBI Taxonomy" id="9483"/>
    <lineage>
        <taxon>Eukaryota</taxon>
        <taxon>Metazoa</taxon>
        <taxon>Chordata</taxon>
        <taxon>Craniata</taxon>
        <taxon>Vertebrata</taxon>
        <taxon>Euteleostomi</taxon>
        <taxon>Mammalia</taxon>
        <taxon>Eutheria</taxon>
        <taxon>Euarchontoglires</taxon>
        <taxon>Primates</taxon>
        <taxon>Haplorrhini</taxon>
        <taxon>Platyrrhini</taxon>
        <taxon>Cebidae</taxon>
        <taxon>Callitrichinae</taxon>
        <taxon>Callithrix</taxon>
        <taxon>Callithrix</taxon>
    </lineage>
</organism>
<sequence length="303" mass="31516">MAPSADMTSLPLGVKVEDSAFGKPAGGGSGQAPGAAAATAAAMGADEEGAKPKVSPSLLPFSVEALMADHRKPGAKESSLAASESAQAAGGLAQPLGVPPGSLGAPDAPSSPRPLGHFSVGGLLKLPEDALVKAESPEKPERTPWMQSPRFSPPPARRLSPPACTLRKHKTNRKPRTPFTTAQLLALERKFRQKQYLSIAERAEFSSSLSLTETQVKIWFQNRRAKAKRLQEAELEKLKMAAKPMLPPAAFGLSFPLGGPAAVAAAAGASLYGASGPFQRAALPVAPVGLYTAHVGYSMYHLT</sequence>
<gene>
    <name evidence="1" type="primary">MSX1</name>
</gene>
<keyword id="KW-0217">Developmental protein</keyword>
<keyword id="KW-0238">DNA-binding</keyword>
<keyword id="KW-0371">Homeobox</keyword>
<keyword id="KW-1017">Isopeptide bond</keyword>
<keyword id="KW-0539">Nucleus</keyword>
<keyword id="KW-1185">Reference proteome</keyword>
<keyword id="KW-0678">Repressor</keyword>
<keyword id="KW-0804">Transcription</keyword>
<keyword id="KW-0805">Transcription regulation</keyword>
<keyword id="KW-0832">Ubl conjugation</keyword>
<evidence type="ECO:0000250" key="1">
    <source>
        <dbReference type="UniProtKB" id="P13297"/>
    </source>
</evidence>
<evidence type="ECO:0000250" key="2">
    <source>
        <dbReference type="UniProtKB" id="P28360"/>
    </source>
</evidence>
<evidence type="ECO:0000255" key="3">
    <source>
        <dbReference type="PROSITE-ProRule" id="PRU00108"/>
    </source>
</evidence>
<evidence type="ECO:0000256" key="4">
    <source>
        <dbReference type="SAM" id="MobiDB-lite"/>
    </source>
</evidence>
<evidence type="ECO:0000305" key="5"/>
<feature type="chain" id="PRO_0000049084" description="Homeobox protein MSX-1">
    <location>
        <begin position="1"/>
        <end position="303"/>
    </location>
</feature>
<feature type="DNA-binding region" description="Homeobox" evidence="3">
    <location>
        <begin position="172"/>
        <end position="231"/>
    </location>
</feature>
<feature type="region of interest" description="Disordered" evidence="4">
    <location>
        <begin position="18"/>
        <end position="56"/>
    </location>
</feature>
<feature type="region of interest" description="Disordered" evidence="4">
    <location>
        <begin position="69"/>
        <end position="116"/>
    </location>
</feature>
<feature type="region of interest" description="Disordered" evidence="4">
    <location>
        <begin position="133"/>
        <end position="163"/>
    </location>
</feature>
<feature type="compositionally biased region" description="Low complexity" evidence="4">
    <location>
        <begin position="32"/>
        <end position="44"/>
    </location>
</feature>
<feature type="compositionally biased region" description="Low complexity" evidence="4">
    <location>
        <begin position="77"/>
        <end position="101"/>
    </location>
</feature>
<feature type="compositionally biased region" description="Basic and acidic residues" evidence="4">
    <location>
        <begin position="133"/>
        <end position="142"/>
    </location>
</feature>
<feature type="cross-link" description="Glycyl lysine isopeptide (Lys-Gly) (interchain with G-Cter in SUMO)" evidence="1">
    <location>
        <position position="15"/>
    </location>
</feature>
<feature type="cross-link" description="Glycyl lysine isopeptide (Lys-Gly) (interchain with G-Cter in SUMO)" evidence="1">
    <location>
        <position position="133"/>
    </location>
</feature>
<dbReference type="EMBL" id="DQ067477">
    <property type="protein sequence ID" value="AAZ30469.1"/>
    <property type="molecule type" value="Genomic_DNA"/>
</dbReference>
<dbReference type="EMBL" id="DQ067476">
    <property type="protein sequence ID" value="AAZ30469.1"/>
    <property type="status" value="JOINED"/>
    <property type="molecule type" value="Genomic_DNA"/>
</dbReference>
<dbReference type="RefSeq" id="XP_035149970.1">
    <property type="nucleotide sequence ID" value="XM_035294079.2"/>
</dbReference>
<dbReference type="SMR" id="Q2VL84"/>
<dbReference type="FunCoup" id="Q2VL84">
    <property type="interactions" value="1807"/>
</dbReference>
<dbReference type="STRING" id="9483.ENSCJAP00000020766"/>
<dbReference type="Ensembl" id="ENSCJAT00000021949.5">
    <property type="protein sequence ID" value="ENSCJAP00000020766.4"/>
    <property type="gene ID" value="ENSCJAG00000011280.5"/>
</dbReference>
<dbReference type="GeneID" id="100412220"/>
<dbReference type="eggNOG" id="KOG0492">
    <property type="taxonomic scope" value="Eukaryota"/>
</dbReference>
<dbReference type="GeneTree" id="ENSGT00940000161623"/>
<dbReference type="InParanoid" id="Q2VL84"/>
<dbReference type="OMA" id="WMQTPRF"/>
<dbReference type="OrthoDB" id="6159439at2759"/>
<dbReference type="Proteomes" id="UP000008225">
    <property type="component" value="Chromosome 3"/>
</dbReference>
<dbReference type="GO" id="GO:0034399">
    <property type="term" value="C:nuclear periphery"/>
    <property type="evidence" value="ECO:0000250"/>
    <property type="project" value="UniProtKB"/>
</dbReference>
<dbReference type="GO" id="GO:0005654">
    <property type="term" value="C:nucleoplasm"/>
    <property type="evidence" value="ECO:0007669"/>
    <property type="project" value="Ensembl"/>
</dbReference>
<dbReference type="GO" id="GO:0005667">
    <property type="term" value="C:transcription regulator complex"/>
    <property type="evidence" value="ECO:0007669"/>
    <property type="project" value="Ensembl"/>
</dbReference>
<dbReference type="GO" id="GO:0000987">
    <property type="term" value="F:cis-regulatory region sequence-specific DNA binding"/>
    <property type="evidence" value="ECO:0007669"/>
    <property type="project" value="Ensembl"/>
</dbReference>
<dbReference type="GO" id="GO:0001228">
    <property type="term" value="F:DNA-binding transcription activator activity, RNA polymerase II-specific"/>
    <property type="evidence" value="ECO:0007669"/>
    <property type="project" value="Ensembl"/>
</dbReference>
<dbReference type="GO" id="GO:0001227">
    <property type="term" value="F:DNA-binding transcription repressor activity, RNA polymerase II-specific"/>
    <property type="evidence" value="ECO:0007669"/>
    <property type="project" value="Ensembl"/>
</dbReference>
<dbReference type="GO" id="GO:0002039">
    <property type="term" value="F:p53 binding"/>
    <property type="evidence" value="ECO:0007669"/>
    <property type="project" value="Ensembl"/>
</dbReference>
<dbReference type="GO" id="GO:0000977">
    <property type="term" value="F:RNA polymerase II transcription regulatory region sequence-specific DNA binding"/>
    <property type="evidence" value="ECO:0007669"/>
    <property type="project" value="Ensembl"/>
</dbReference>
<dbReference type="GO" id="GO:0000976">
    <property type="term" value="F:transcription cis-regulatory region binding"/>
    <property type="evidence" value="ECO:0000250"/>
    <property type="project" value="UniProtKB"/>
</dbReference>
<dbReference type="GO" id="GO:0090427">
    <property type="term" value="P:activation of meiosis"/>
    <property type="evidence" value="ECO:0007669"/>
    <property type="project" value="Ensembl"/>
</dbReference>
<dbReference type="GO" id="GO:0009952">
    <property type="term" value="P:anterior/posterior pattern specification"/>
    <property type="evidence" value="ECO:0007669"/>
    <property type="project" value="Ensembl"/>
</dbReference>
<dbReference type="GO" id="GO:0030509">
    <property type="term" value="P:BMP signaling pathway"/>
    <property type="evidence" value="ECO:0007669"/>
    <property type="project" value="Ensembl"/>
</dbReference>
<dbReference type="GO" id="GO:0060349">
    <property type="term" value="P:bone morphogenesis"/>
    <property type="evidence" value="ECO:0007669"/>
    <property type="project" value="Ensembl"/>
</dbReference>
<dbReference type="GO" id="GO:0060536">
    <property type="term" value="P:cartilage morphogenesis"/>
    <property type="evidence" value="ECO:0007669"/>
    <property type="project" value="Ensembl"/>
</dbReference>
<dbReference type="GO" id="GO:0000902">
    <property type="term" value="P:cell morphogenesis"/>
    <property type="evidence" value="ECO:0007669"/>
    <property type="project" value="Ensembl"/>
</dbReference>
<dbReference type="GO" id="GO:0061311">
    <property type="term" value="P:cell surface receptor signaling pathway involved in heart development"/>
    <property type="evidence" value="ECO:0007669"/>
    <property type="project" value="Ensembl"/>
</dbReference>
<dbReference type="GO" id="GO:0035115">
    <property type="term" value="P:embryonic forelimb morphogenesis"/>
    <property type="evidence" value="ECO:0007669"/>
    <property type="project" value="Ensembl"/>
</dbReference>
<dbReference type="GO" id="GO:0035116">
    <property type="term" value="P:embryonic hindlimb morphogenesis"/>
    <property type="evidence" value="ECO:0007669"/>
    <property type="project" value="Ensembl"/>
</dbReference>
<dbReference type="GO" id="GO:0035880">
    <property type="term" value="P:embryonic nail plate morphogenesis"/>
    <property type="evidence" value="ECO:0007669"/>
    <property type="project" value="Ensembl"/>
</dbReference>
<dbReference type="GO" id="GO:0003198">
    <property type="term" value="P:epithelial to mesenchymal transition involved in endocardial cushion formation"/>
    <property type="evidence" value="ECO:0007669"/>
    <property type="project" value="Ensembl"/>
</dbReference>
<dbReference type="GO" id="GO:0060325">
    <property type="term" value="P:face morphogenesis"/>
    <property type="evidence" value="ECO:0007669"/>
    <property type="project" value="Ensembl"/>
</dbReference>
<dbReference type="GO" id="GO:0030900">
    <property type="term" value="P:forebrain development"/>
    <property type="evidence" value="ECO:0007669"/>
    <property type="project" value="Ensembl"/>
</dbReference>
<dbReference type="GO" id="GO:0001701">
    <property type="term" value="P:in utero embryonic development"/>
    <property type="evidence" value="ECO:0007669"/>
    <property type="project" value="Ensembl"/>
</dbReference>
<dbReference type="GO" id="GO:0048839">
    <property type="term" value="P:inner ear development"/>
    <property type="evidence" value="ECO:0000250"/>
    <property type="project" value="UniProtKB"/>
</dbReference>
<dbReference type="GO" id="GO:0061180">
    <property type="term" value="P:mammary gland epithelium development"/>
    <property type="evidence" value="ECO:0007669"/>
    <property type="project" value="Ensembl"/>
</dbReference>
<dbReference type="GO" id="GO:0097152">
    <property type="term" value="P:mesenchymal cell apoptotic process"/>
    <property type="evidence" value="ECO:0007669"/>
    <property type="project" value="Ensembl"/>
</dbReference>
<dbReference type="GO" id="GO:0010463">
    <property type="term" value="P:mesenchymal cell proliferation"/>
    <property type="evidence" value="ECO:0007669"/>
    <property type="project" value="Ensembl"/>
</dbReference>
<dbReference type="GO" id="GO:0030901">
    <property type="term" value="P:midbrain development"/>
    <property type="evidence" value="ECO:0007669"/>
    <property type="project" value="Ensembl"/>
</dbReference>
<dbReference type="GO" id="GO:0042474">
    <property type="term" value="P:middle ear morphogenesis"/>
    <property type="evidence" value="ECO:0007669"/>
    <property type="project" value="Ensembl"/>
</dbReference>
<dbReference type="GO" id="GO:0007517">
    <property type="term" value="P:muscle organ development"/>
    <property type="evidence" value="ECO:0007669"/>
    <property type="project" value="Ensembl"/>
</dbReference>
<dbReference type="GO" id="GO:0043066">
    <property type="term" value="P:negative regulation of apoptotic process"/>
    <property type="evidence" value="ECO:0007669"/>
    <property type="project" value="Ensembl"/>
</dbReference>
<dbReference type="GO" id="GO:0030308">
    <property type="term" value="P:negative regulation of cell growth"/>
    <property type="evidence" value="ECO:0007669"/>
    <property type="project" value="Ensembl"/>
</dbReference>
<dbReference type="GO" id="GO:0008285">
    <property type="term" value="P:negative regulation of cell population proliferation"/>
    <property type="evidence" value="ECO:0007669"/>
    <property type="project" value="Ensembl"/>
</dbReference>
<dbReference type="GO" id="GO:0010629">
    <property type="term" value="P:negative regulation of gene expression"/>
    <property type="evidence" value="ECO:0000250"/>
    <property type="project" value="UniProtKB"/>
</dbReference>
<dbReference type="GO" id="GO:1901330">
    <property type="term" value="P:negative regulation of odontoblast differentiation"/>
    <property type="evidence" value="ECO:0000250"/>
    <property type="project" value="UniProtKB"/>
</dbReference>
<dbReference type="GO" id="GO:0051154">
    <property type="term" value="P:negative regulation of striated muscle cell differentiation"/>
    <property type="evidence" value="ECO:0007669"/>
    <property type="project" value="Ensembl"/>
</dbReference>
<dbReference type="GO" id="GO:0043584">
    <property type="term" value="P:nose development"/>
    <property type="evidence" value="ECO:0000250"/>
    <property type="project" value="UniProtKB"/>
</dbReference>
<dbReference type="GO" id="GO:0042475">
    <property type="term" value="P:odontogenesis of dentin-containing tooth"/>
    <property type="evidence" value="ECO:0007669"/>
    <property type="project" value="Ensembl"/>
</dbReference>
<dbReference type="GO" id="GO:0030513">
    <property type="term" value="P:positive regulation of BMP signaling pathway"/>
    <property type="evidence" value="ECO:0007669"/>
    <property type="project" value="Ensembl"/>
</dbReference>
<dbReference type="GO" id="GO:0045787">
    <property type="term" value="P:positive regulation of cell cycle"/>
    <property type="evidence" value="ECO:0000250"/>
    <property type="project" value="UniProtKB"/>
</dbReference>
<dbReference type="GO" id="GO:1902255">
    <property type="term" value="P:positive regulation of intrinsic apoptotic signaling pathway by p53 class mediator"/>
    <property type="evidence" value="ECO:0007669"/>
    <property type="project" value="Ensembl"/>
</dbReference>
<dbReference type="GO" id="GO:2001055">
    <property type="term" value="P:positive regulation of mesenchymal cell apoptotic process"/>
    <property type="evidence" value="ECO:0007669"/>
    <property type="project" value="Ensembl"/>
</dbReference>
<dbReference type="GO" id="GO:0042482">
    <property type="term" value="P:positive regulation of odontogenesis"/>
    <property type="evidence" value="ECO:0000250"/>
    <property type="project" value="UniProtKB"/>
</dbReference>
<dbReference type="GO" id="GO:0034504">
    <property type="term" value="P:protein localization to nucleus"/>
    <property type="evidence" value="ECO:0007669"/>
    <property type="project" value="Ensembl"/>
</dbReference>
<dbReference type="GO" id="GO:0050821">
    <property type="term" value="P:protein stabilization"/>
    <property type="evidence" value="ECO:0007669"/>
    <property type="project" value="Ensembl"/>
</dbReference>
<dbReference type="GO" id="GO:0042481">
    <property type="term" value="P:regulation of odontogenesis"/>
    <property type="evidence" value="ECO:0000250"/>
    <property type="project" value="UniProtKB"/>
</dbReference>
<dbReference type="GO" id="GO:0060021">
    <property type="term" value="P:roof of mouth development"/>
    <property type="evidence" value="ECO:0000250"/>
    <property type="project" value="UniProtKB"/>
</dbReference>
<dbReference type="GO" id="GO:0023019">
    <property type="term" value="P:signal transduction involved in regulation of gene expression"/>
    <property type="evidence" value="ECO:0007669"/>
    <property type="project" value="Ensembl"/>
</dbReference>
<dbReference type="GO" id="GO:0048863">
    <property type="term" value="P:stem cell differentiation"/>
    <property type="evidence" value="ECO:0007669"/>
    <property type="project" value="Ensembl"/>
</dbReference>
<dbReference type="GO" id="GO:0006366">
    <property type="term" value="P:transcription by RNA polymerase II"/>
    <property type="evidence" value="ECO:0007669"/>
    <property type="project" value="Ensembl"/>
</dbReference>
<dbReference type="CDD" id="cd00086">
    <property type="entry name" value="homeodomain"/>
    <property type="match status" value="1"/>
</dbReference>
<dbReference type="FunFam" id="1.10.10.60:FF:000134">
    <property type="entry name" value="Homeobox protein MSX-1"/>
    <property type="match status" value="1"/>
</dbReference>
<dbReference type="Gene3D" id="1.10.10.60">
    <property type="entry name" value="Homeodomain-like"/>
    <property type="match status" value="1"/>
</dbReference>
<dbReference type="InterPro" id="IPR001356">
    <property type="entry name" value="HD"/>
</dbReference>
<dbReference type="InterPro" id="IPR020479">
    <property type="entry name" value="HD_metazoa"/>
</dbReference>
<dbReference type="InterPro" id="IPR017970">
    <property type="entry name" value="Homeobox_CS"/>
</dbReference>
<dbReference type="InterPro" id="IPR009057">
    <property type="entry name" value="Homeodomain-like_sf"/>
</dbReference>
<dbReference type="InterPro" id="IPR050674">
    <property type="entry name" value="Msh_Homeobox_Regulators"/>
</dbReference>
<dbReference type="PANTHER" id="PTHR24338">
    <property type="entry name" value="HOMEOBOX PROTEIN MSX"/>
    <property type="match status" value="1"/>
</dbReference>
<dbReference type="PANTHER" id="PTHR24338:SF8">
    <property type="entry name" value="HOMEOBOX PROTEIN MSX-1"/>
    <property type="match status" value="1"/>
</dbReference>
<dbReference type="Pfam" id="PF00046">
    <property type="entry name" value="Homeodomain"/>
    <property type="match status" value="1"/>
</dbReference>
<dbReference type="PRINTS" id="PR00024">
    <property type="entry name" value="HOMEOBOX"/>
</dbReference>
<dbReference type="SMART" id="SM00389">
    <property type="entry name" value="HOX"/>
    <property type="match status" value="1"/>
</dbReference>
<dbReference type="SUPFAM" id="SSF46689">
    <property type="entry name" value="Homeodomain-like"/>
    <property type="match status" value="1"/>
</dbReference>
<dbReference type="PROSITE" id="PS00027">
    <property type="entry name" value="HOMEOBOX_1"/>
    <property type="match status" value="1"/>
</dbReference>
<dbReference type="PROSITE" id="PS50071">
    <property type="entry name" value="HOMEOBOX_2"/>
    <property type="match status" value="1"/>
</dbReference>
<proteinExistence type="inferred from homology"/>